<keyword id="KW-0002">3D-structure</keyword>
<keyword id="KW-1035">Host cytoplasm</keyword>
<keyword id="KW-0433">Leucine-rich repeat</keyword>
<keyword id="KW-0614">Plasmid</keyword>
<keyword id="KW-1185">Reference proteome</keyword>
<keyword id="KW-0677">Repeat</keyword>
<keyword id="KW-0964">Secreted</keyword>
<keyword id="KW-0808">Transferase</keyword>
<keyword id="KW-0832">Ubl conjugation</keyword>
<keyword id="KW-0833">Ubl conjugation pathway</keyword>
<keyword id="KW-0843">Virulence</keyword>
<accession>A0A0H2USG1</accession>
<organism>
    <name type="scientific">Shigella flexneri</name>
    <dbReference type="NCBI Taxonomy" id="623"/>
    <lineage>
        <taxon>Bacteria</taxon>
        <taxon>Pseudomonadati</taxon>
        <taxon>Pseudomonadota</taxon>
        <taxon>Gammaproteobacteria</taxon>
        <taxon>Enterobacterales</taxon>
        <taxon>Enterobacteriaceae</taxon>
        <taxon>Shigella</taxon>
    </lineage>
</organism>
<gene>
    <name evidence="10" type="primary">ipaH1.4</name>
    <name evidence="12" type="ordered locus">CP0265</name>
    <name evidence="12" type="ORF">SF_p0265</name>
</gene>
<evidence type="ECO:0000250" key="1">
    <source>
        <dbReference type="UniProtKB" id="P0CE12"/>
    </source>
</evidence>
<evidence type="ECO:0000250" key="2">
    <source>
        <dbReference type="UniProtKB" id="Q8VSC3"/>
    </source>
</evidence>
<evidence type="ECO:0000255" key="3"/>
<evidence type="ECO:0000255" key="4">
    <source>
        <dbReference type="PROSITE-ProRule" id="PRU01398"/>
    </source>
</evidence>
<evidence type="ECO:0000269" key="5">
    <source>
    </source>
</evidence>
<evidence type="ECO:0000269" key="6">
    <source>
    </source>
</evidence>
<evidence type="ECO:0000269" key="7">
    <source>
    </source>
</evidence>
<evidence type="ECO:0000269" key="8">
    <source>
    </source>
</evidence>
<evidence type="ECO:0000269" key="9">
    <source>
    </source>
</evidence>
<evidence type="ECO:0000303" key="10">
    <source>
    </source>
</evidence>
<evidence type="ECO:0000305" key="11"/>
<evidence type="ECO:0000312" key="12">
    <source>
        <dbReference type="EMBL" id="AAL72349.2"/>
    </source>
</evidence>
<evidence type="ECO:0007744" key="13">
    <source>
        <dbReference type="PDB" id="3CKD"/>
    </source>
</evidence>
<evidence type="ECO:0007744" key="14">
    <source>
        <dbReference type="PDB" id="7V8E"/>
    </source>
</evidence>
<evidence type="ECO:0007744" key="15">
    <source>
        <dbReference type="PDB" id="7V8G"/>
    </source>
</evidence>
<evidence type="ECO:0007744" key="16">
    <source>
        <dbReference type="PDB" id="7V8H"/>
    </source>
</evidence>
<evidence type="ECO:0007829" key="17">
    <source>
        <dbReference type="PDB" id="7YA7"/>
    </source>
</evidence>
<dbReference type="EC" id="2.3.2.27" evidence="5 6 8"/>
<dbReference type="EMBL" id="AF386526">
    <property type="protein sequence ID" value="AAL72349.2"/>
    <property type="molecule type" value="Genomic_DNA"/>
</dbReference>
<dbReference type="RefSeq" id="NP_858398.2">
    <property type="nucleotide sequence ID" value="NC_004851.1"/>
</dbReference>
<dbReference type="RefSeq" id="WP_000597731.1">
    <property type="nucleotide sequence ID" value="NZ_WACK01000004.1"/>
</dbReference>
<dbReference type="PDB" id="3CKD">
    <property type="method" value="X-ray"/>
    <property type="resolution" value="2.65 A"/>
    <property type="chains" value="A/B/C=265-575"/>
</dbReference>
<dbReference type="PDB" id="7V8E">
    <property type="method" value="X-ray"/>
    <property type="resolution" value="1.90 A"/>
    <property type="chains" value="A/B=39-273"/>
</dbReference>
<dbReference type="PDB" id="7V8G">
    <property type="method" value="X-ray"/>
    <property type="resolution" value="2.75 A"/>
    <property type="chains" value="A/B=38-273"/>
</dbReference>
<dbReference type="PDB" id="7V8H">
    <property type="method" value="X-ray"/>
    <property type="resolution" value="2.46 A"/>
    <property type="chains" value="A/B=38-273"/>
</dbReference>
<dbReference type="PDB" id="7YA7">
    <property type="method" value="X-ray"/>
    <property type="resolution" value="1.40 A"/>
    <property type="chains" value="A/B=43-281"/>
</dbReference>
<dbReference type="PDBsum" id="3CKD"/>
<dbReference type="PDBsum" id="7V8E"/>
<dbReference type="PDBsum" id="7V8G"/>
<dbReference type="PDBsum" id="7V8H"/>
<dbReference type="PDBsum" id="7YA7"/>
<dbReference type="SMR" id="A0A0H2USG1"/>
<dbReference type="IntAct" id="A0A0H2USG1">
    <property type="interactions" value="1"/>
</dbReference>
<dbReference type="PaxDb" id="198214-CP0265"/>
<dbReference type="GeneID" id="1238052"/>
<dbReference type="KEGG" id="sfl:CP0265"/>
<dbReference type="PATRIC" id="fig|198214.7.peg.5527"/>
<dbReference type="HOGENOM" id="CLU_018533_2_0_6"/>
<dbReference type="OMA" id="AMANNFI"/>
<dbReference type="UniPathway" id="UPA00143"/>
<dbReference type="Proteomes" id="UP000001006">
    <property type="component" value="Plasmid pCP301"/>
</dbReference>
<dbReference type="GO" id="GO:0005576">
    <property type="term" value="C:extracellular region"/>
    <property type="evidence" value="ECO:0007669"/>
    <property type="project" value="UniProtKB-SubCell"/>
</dbReference>
<dbReference type="GO" id="GO:0030430">
    <property type="term" value="C:host cell cytoplasm"/>
    <property type="evidence" value="ECO:0007669"/>
    <property type="project" value="UniProtKB-SubCell"/>
</dbReference>
<dbReference type="GO" id="GO:0090729">
    <property type="term" value="F:toxin activity"/>
    <property type="evidence" value="ECO:0000314"/>
    <property type="project" value="UniProtKB"/>
</dbReference>
<dbReference type="GO" id="GO:0061630">
    <property type="term" value="F:ubiquitin protein ligase activity"/>
    <property type="evidence" value="ECO:0000314"/>
    <property type="project" value="UniProtKB"/>
</dbReference>
<dbReference type="GO" id="GO:0016567">
    <property type="term" value="P:protein ubiquitination"/>
    <property type="evidence" value="ECO:0007669"/>
    <property type="project" value="UniProtKB-UniPathway"/>
</dbReference>
<dbReference type="GO" id="GO:0085034">
    <property type="term" value="P:symbiont-mediated suppression of host NF-kappaB cascade"/>
    <property type="evidence" value="ECO:0000314"/>
    <property type="project" value="UniProtKB"/>
</dbReference>
<dbReference type="FunFam" id="1.20.58.90:FF:000007">
    <property type="entry name" value="E3 ubiquitin-protein ligase ipaH9.8"/>
    <property type="match status" value="1"/>
</dbReference>
<dbReference type="FunFam" id="1.20.1270.130:FF:000001">
    <property type="entry name" value="Invasion plasmid antigen IpaH"/>
    <property type="match status" value="1"/>
</dbReference>
<dbReference type="FunFam" id="1.20.58.360:FF:000001">
    <property type="entry name" value="Probable E3 ubiquitin-protein ligase ipaH7.8"/>
    <property type="match status" value="1"/>
</dbReference>
<dbReference type="Gene3D" id="1.20.58.90">
    <property type="match status" value="1"/>
</dbReference>
<dbReference type="Gene3D" id="3.80.10.10">
    <property type="entry name" value="Ribonuclease Inhibitor"/>
    <property type="match status" value="1"/>
</dbReference>
<dbReference type="Gene3D" id="1.20.58.360">
    <property type="entry name" value="Shigella T3SS effector IpaH defines"/>
    <property type="match status" value="1"/>
</dbReference>
<dbReference type="Gene3D" id="1.20.1270.130">
    <property type="entry name" value="Shigella T3SS effector IpaH domain"/>
    <property type="match status" value="1"/>
</dbReference>
<dbReference type="InterPro" id="IPR001611">
    <property type="entry name" value="Leu-rich_rpt"/>
</dbReference>
<dbReference type="InterPro" id="IPR051071">
    <property type="entry name" value="LRR-bact_E3_ubiq_ligases"/>
</dbReference>
<dbReference type="InterPro" id="IPR032675">
    <property type="entry name" value="LRR_dom_sf"/>
</dbReference>
<dbReference type="InterPro" id="IPR032674">
    <property type="entry name" value="LRR_E3_ligase_N"/>
</dbReference>
<dbReference type="InterPro" id="IPR029487">
    <property type="entry name" value="NEL_dom"/>
</dbReference>
<dbReference type="NCBIfam" id="NF046045">
    <property type="entry name" value="IpaH_Shig"/>
    <property type="match status" value="1"/>
</dbReference>
<dbReference type="PANTHER" id="PTHR47114">
    <property type="match status" value="1"/>
</dbReference>
<dbReference type="PANTHER" id="PTHR47114:SF2">
    <property type="entry name" value="OLIGODENDROCYTE-MYELIN GLYCOPROTEIN"/>
    <property type="match status" value="1"/>
</dbReference>
<dbReference type="Pfam" id="PF12468">
    <property type="entry name" value="LRR_TTSS"/>
    <property type="match status" value="1"/>
</dbReference>
<dbReference type="Pfam" id="PF14496">
    <property type="entry name" value="NEL"/>
    <property type="match status" value="1"/>
</dbReference>
<dbReference type="SMART" id="SM00364">
    <property type="entry name" value="LRR_BAC"/>
    <property type="match status" value="8"/>
</dbReference>
<dbReference type="SUPFAM" id="SSF52058">
    <property type="entry name" value="L domain-like"/>
    <property type="match status" value="1"/>
</dbReference>
<dbReference type="PROSITE" id="PS51450">
    <property type="entry name" value="LRR"/>
    <property type="match status" value="4"/>
</dbReference>
<dbReference type="PROSITE" id="PS52053">
    <property type="entry name" value="NEL"/>
    <property type="match status" value="1"/>
</dbReference>
<comment type="function">
    <text evidence="5 6 7 8 9">E3 ubiquitin-protein ligase effector that inhibits host cell innate immunity during bacterial infection by catalyzing 'Lys-48'-linked polyubiquitination and subsequent degradation of host RNF31/HOIP and RBCK1/HOIL-1 (PubMed:18997778, PubMed:27572974, PubMed:35294289, PubMed:36610722). Host RNF31/HOIP is the catalytic component of the LUBAC complex, which conjugates linear ('Met-1'-linked) polyubiquitin chains at the surface of bacteria invading the host cytosol to form the ubiquitin coat surrounding bacteria (PubMed:27572974, PubMed:35294289). The bacterial ubiquitin coat acts as an 'eat-me' signal for xenophagy and promotes NF-kappa-B activation (PubMed:27572974, PubMed:28481331). By promoting degradation of host RNF31/HOIP, IpaH1.4 prevents formation of the bacterial ubiquitin coat and activation of host cell innate immunity (PubMed:27572974, PubMed:28481331).</text>
</comment>
<comment type="catalytic activity">
    <reaction evidence="5 6 8">
        <text>S-ubiquitinyl-[E2 ubiquitin-conjugating enzyme]-L-cysteine + [acceptor protein]-L-lysine = [E2 ubiquitin-conjugating enzyme]-L-cysteine + N(6)-ubiquitinyl-[acceptor protein]-L-lysine.</text>
        <dbReference type="EC" id="2.3.2.27"/>
    </reaction>
</comment>
<comment type="activity regulation">
    <text evidence="2">Exists in an autoinhibited state in the absence of substrate protein, probably due to interactions of the leucine-rich repeat domain with the catalytic domain. Is activated upon binding to a substrate protein.</text>
</comment>
<comment type="pathway">
    <text evidence="5 6 8">Protein modification; protein ubiquitination.</text>
</comment>
<comment type="subunit">
    <text evidence="6">Interacts with human RBCK1/HOIL-1 and RNF31/HOIP components of the LUBAC complex.</text>
</comment>
<comment type="subcellular location">
    <subcellularLocation>
        <location evidence="2">Secreted</location>
    </subcellularLocation>
    <subcellularLocation>
        <location evidence="2">Host cytoplasm</location>
    </subcellularLocation>
    <text evidence="2">Secreted via Mxi-Spa type III secretion system (T3SS), and delivered into the host cytoplasm.</text>
</comment>
<comment type="domain">
    <text evidence="1">The LRR (leucine-rich repeat) domain forms a slightly curved solenoid and may mediate interaction with target proteins.</text>
</comment>
<comment type="PTM">
    <text evidence="4">Ubiquitinated in the presence of host E1 ubiquitin-activating enzyme, E2 ubiquitin-conjugating enzyme and ubiquitin.</text>
</comment>
<comment type="similarity">
    <text evidence="4 11">Belongs to the LRR-containing bacterial E3 ligase family.</text>
</comment>
<geneLocation type="plasmid">
    <name>pCP301</name>
</geneLocation>
<sequence length="575" mass="64859">MIKSTNIQAIGSGIMHQINNVYSLTPLSLPMELTPSCNEFYLKTWSEWEKNGTPGEQRNIAFNRLKICLQNQEAELNLSELDLKTLPDLPPQITTLEIRKNLLTHLPDLPPMLKVIHAQFNQLESLPALPETLEELNAGDNKIKELPFLPENLTHLRVHNNRLHILPLLPPELKLLVVSGNRLDSIPPFPDKLEGLALANNFIEQLPELPFSMNRAVLMNNNLTTLPESVLRLAQNAFVNVAGNPLSGHTMRTLQQITTGPDYSGPQIFFSMGNSATISAPEHSLADAVTAWFPENKQSDVSQIWHAFEHEEHANTFSAFLDRLSDTVSARNTSGFREQVAAWLEKLSASAELRQQSFAVAADATESCEDRVALTWNNLRKTLLVHQASEGLFDNDTGALLSLGREMFRLEILEDIARDKVRTLHFVDEIEVYLAFQTMLAEKLQLSTAVKEMRFYGVSGVTANDLRTAEAMVRSREENEFTDWFSLWGPWHAVLKRTEADRWAQAEEQKYEMLENEYSQRVADRLKASGLSGDADAEREAGAQVMRETEQQIYRQLTDEVLALRLSENGSNHIA</sequence>
<proteinExistence type="evidence at protein level"/>
<name>IPA14_SHIFL</name>
<protein>
    <recommendedName>
        <fullName evidence="11">E3 ubiquitin-protein ligase IpaH1.4</fullName>
        <ecNumber evidence="5 6 8">2.3.2.27</ecNumber>
    </recommendedName>
    <alternativeName>
        <fullName evidence="10">Invasion plasmid antigen 1.4</fullName>
    </alternativeName>
</protein>
<reference key="1">
    <citation type="journal article" date="2002" name="Nucleic Acids Res.">
        <title>Genome sequence of Shigella flexneri 2a: insights into pathogenicity through comparison with genomes of Escherichia coli K12 and O157.</title>
        <authorList>
            <person name="Jin Q."/>
            <person name="Yuan Z."/>
            <person name="Xu J."/>
            <person name="Wang Y."/>
            <person name="Shen Y."/>
            <person name="Lu W."/>
            <person name="Wang J."/>
            <person name="Liu H."/>
            <person name="Yang J."/>
            <person name="Yang F."/>
            <person name="Zhang X."/>
            <person name="Zhang J."/>
            <person name="Yang G."/>
            <person name="Wu H."/>
            <person name="Qu D."/>
            <person name="Dong J."/>
            <person name="Sun L."/>
            <person name="Xue Y."/>
            <person name="Zhao A."/>
            <person name="Gao Y."/>
            <person name="Zhu J."/>
            <person name="Kan B."/>
            <person name="Ding K."/>
            <person name="Chen S."/>
            <person name="Cheng H."/>
            <person name="Yao Z."/>
            <person name="He B."/>
            <person name="Chen R."/>
            <person name="Ma D."/>
            <person name="Qiang B."/>
            <person name="Wen Y."/>
            <person name="Hou Y."/>
            <person name="Yu J."/>
        </authorList>
    </citation>
    <scope>NUCLEOTIDE SEQUENCE [LARGE SCALE GENOMIC DNA]</scope>
    <source>
        <strain>301 / Serotype 2a</strain>
        <plasmid>pCP301</plasmid>
    </source>
</reference>
<reference key="2">
    <citation type="journal article" date="1990" name="J. Bacteriol.">
        <title>Sequence and molecular characterization of a multicopy invasion plasmid antigen gene, ipaH, of Shigella flexneri.</title>
        <authorList>
            <person name="Hartman A.B."/>
            <person name="Venkatesan M.M."/>
            <person name="Oaks E.V."/>
            <person name="Buysse J.M."/>
        </authorList>
    </citation>
    <scope>IDENTIFICATION</scope>
    <source>
        <strain>M90T / Serotype 5a</strain>
    </source>
</reference>
<reference key="3">
    <citation type="journal article" date="2016" name="Nat. Microbiol.">
        <title>Shigella flexneri suppresses NF-kappaB activation by inhibiting linear ubiquitin chain ligation.</title>
        <authorList>
            <person name="de Jong M.F."/>
            <person name="Liu Z."/>
            <person name="Chen D."/>
            <person name="Alto N.M."/>
        </authorList>
    </citation>
    <scope>FUNCTION</scope>
    <scope>PATHWAY</scope>
    <scope>CATALYTIC ACTIVITY</scope>
    <scope>INTERACTION WITH HUMAN RBCK1 AND RNF31</scope>
</reference>
<reference key="4">
    <citation type="journal article" date="2017" name="Nat. Microbiol.">
        <title>LUBAC-synthesized linear ubiquitin chains restrict cytosol-invading bacteria by activating autophagy and NF-kappaB.</title>
        <authorList>
            <person name="Noad J."/>
            <person name="von der Malsburg A."/>
            <person name="Pathe C."/>
            <person name="Michel M.A."/>
            <person name="Komander D."/>
            <person name="Randow F."/>
        </authorList>
    </citation>
    <scope>FUNCTION</scope>
</reference>
<reference evidence="13" key="5">
    <citation type="journal article" date="2008" name="Nat. Struct. Mol. Biol.">
        <title>Structure of the Shigella T3SS effector IpaH defines a new class of E3 ubiquitin ligases.</title>
        <authorList>
            <person name="Singer A.U."/>
            <person name="Rohde J.R."/>
            <person name="Lam R."/>
            <person name="Skarina T."/>
            <person name="Kagan O."/>
            <person name="Dileo R."/>
            <person name="Chirgadze N.Y."/>
            <person name="Cuff M.E."/>
            <person name="Joachimiak A."/>
            <person name="Tyers M."/>
            <person name="Sansonetti P.J."/>
            <person name="Parsot C."/>
            <person name="Savchenko A."/>
        </authorList>
    </citation>
    <scope>X-RAY CRYSTALLOGRAPHY (2.65 ANGSTROMS) OF 255-560</scope>
    <scope>FUNCTION</scope>
    <scope>CATALYTIC ACTIVITY</scope>
    <scope>PATHWAY</scope>
</reference>
<reference evidence="14 15 16" key="6">
    <citation type="journal article" date="2022" name="Proc. Natl. Acad. Sci. U.S.A.">
        <title>Mechanistic insights into the subversion of the linear ubiquitin chain assembly complex by the E3 ligase IpaH1.4 of Shigella flexneri.</title>
        <authorList>
            <person name="Liu J."/>
            <person name="Wang Y."/>
            <person name="Wang D."/>
            <person name="Wang Y."/>
            <person name="Xu X."/>
            <person name="Zhang Y."/>
            <person name="Li Y."/>
            <person name="Zhang M."/>
            <person name="Gong X."/>
            <person name="Tang Y."/>
            <person name="Shen L."/>
            <person name="Li M."/>
            <person name="Pan L."/>
        </authorList>
    </citation>
    <scope>X-RAY CRYSTALLOGRAPHY (1.90 ANGSTROMS) OF 39-273 IN COMPLEX WITH HOST RNF31</scope>
    <scope>FUNCTION</scope>
    <scope>PATHWAY</scope>
    <scope>CATALYTIC ACTIVITY</scope>
    <scope>MUTAGENESIS OF ARG-157; ARG-215; 238-PHE--ASN-240 AND PHE-269</scope>
</reference>
<reference evidence="17" key="7">
    <citation type="journal article" date="2023" name="J. Biochem.">
        <title>Structural insight into the recognition of the linear ubiquitin assembly complex by Shigella E3 ligase IpaH1.4/2.5.</title>
        <authorList>
            <person name="Hiragi K."/>
            <person name="Nishide A."/>
            <person name="Takagi K."/>
            <person name="Iwai K."/>
            <person name="Kim M."/>
            <person name="Mizushima T."/>
        </authorList>
    </citation>
    <scope>X-RAY CRYSTALLOGRAPHY (1.40 ANGSTROMS) OF 43-281</scope>
    <scope>FUNCTION</scope>
    <scope>MUTAGENESIS OF 99-ARG-LYS-100</scope>
</reference>
<feature type="chain" id="PRO_0000454196" description="E3 ubiquitin-protein ligase IpaH1.4">
    <location>
        <begin position="1"/>
        <end position="575"/>
    </location>
</feature>
<feature type="repeat" description="LRR 1" evidence="3">
    <location>
        <begin position="69"/>
        <end position="90"/>
    </location>
</feature>
<feature type="repeat" description="LRR 2" evidence="3">
    <location>
        <begin position="91"/>
        <end position="115"/>
    </location>
</feature>
<feature type="repeat" description="LRR 3" evidence="3">
    <location>
        <begin position="117"/>
        <end position="130"/>
    </location>
</feature>
<feature type="repeat" description="LRR 4" evidence="3">
    <location>
        <begin position="131"/>
        <end position="150"/>
    </location>
</feature>
<feature type="repeat" description="LRR 5" evidence="3">
    <location>
        <begin position="151"/>
        <end position="170"/>
    </location>
</feature>
<feature type="repeat" description="LRR 6" evidence="3">
    <location>
        <begin position="171"/>
        <end position="195"/>
    </location>
</feature>
<feature type="repeat" description="LRR 7" evidence="3">
    <location>
        <begin position="197"/>
        <end position="209"/>
    </location>
</feature>
<feature type="repeat" description="LRR 8" evidence="3">
    <location>
        <begin position="210"/>
        <end position="233"/>
    </location>
</feature>
<feature type="domain" description="NEL" evidence="4">
    <location>
        <begin position="284"/>
        <end position="575"/>
    </location>
</feature>
<feature type="region of interest" description="Interaction with target proteins" evidence="1">
    <location>
        <begin position="1"/>
        <end position="270"/>
    </location>
</feature>
<feature type="region of interest" description="Linker" evidence="1">
    <location>
        <begin position="271"/>
        <end position="281"/>
    </location>
</feature>
<feature type="region of interest" description="E3 ubiquitin-protein ligase catalytic domain" evidence="1">
    <location>
        <begin position="282"/>
        <end position="575"/>
    </location>
</feature>
<feature type="active site" description="Glycyl thioester intermediate" evidence="4">
    <location>
        <position position="368"/>
    </location>
</feature>
<feature type="mutagenesis site" description="Strongly reduced ability to ubiquitinate host RNF31/HOIP." evidence="9">
    <original>RK</original>
    <variation>AA</variation>
    <location>
        <begin position="99"/>
        <end position="100"/>
    </location>
</feature>
<feature type="mutagenesis site" description="Abolished interaction with host RNF31/HOIP without affecting interaction with host RBCK1/HOIL-1." evidence="8">
    <original>R</original>
    <variation>A</variation>
    <location>
        <position position="157"/>
    </location>
</feature>
<feature type="mutagenesis site" description="Abolished interaction with host RNF31/HOIP and RBCK1/HOIL-1." evidence="8">
    <original>R</original>
    <variation>E</variation>
    <location>
        <position position="215"/>
    </location>
</feature>
<feature type="mutagenesis site" description="Abolished interaction with host RNF31/HOIP and RBCK1/HOIL-1." evidence="8">
    <original>FVN</original>
    <variation>EVD</variation>
    <location>
        <begin position="238"/>
        <end position="240"/>
    </location>
</feature>
<feature type="mutagenesis site" description="Abolished interaction with host RNF31/HOIP and RBCK1/HOIL-1." evidence="8">
    <original>F</original>
    <variation>E</variation>
    <location>
        <position position="269"/>
    </location>
</feature>
<feature type="helix" evidence="17">
    <location>
        <begin position="38"/>
        <end position="49"/>
    </location>
</feature>
<feature type="helix" evidence="17">
    <location>
        <begin position="58"/>
        <end position="70"/>
    </location>
</feature>
<feature type="strand" evidence="17">
    <location>
        <begin position="74"/>
        <end position="77"/>
    </location>
</feature>
<feature type="strand" evidence="17">
    <location>
        <begin position="94"/>
        <end position="97"/>
    </location>
</feature>
<feature type="strand" evidence="17">
    <location>
        <begin position="115"/>
        <end position="117"/>
    </location>
</feature>
<feature type="strand" evidence="17">
    <location>
        <begin position="135"/>
        <end position="137"/>
    </location>
</feature>
<feature type="strand" evidence="17">
    <location>
        <begin position="155"/>
        <end position="157"/>
    </location>
</feature>
<feature type="strand" evidence="17">
    <location>
        <begin position="175"/>
        <end position="177"/>
    </location>
</feature>
<feature type="strand" evidence="17">
    <location>
        <begin position="195"/>
        <end position="197"/>
    </location>
</feature>
<feature type="strand" evidence="17">
    <location>
        <begin position="215"/>
        <end position="217"/>
    </location>
</feature>
<feature type="helix" evidence="17">
    <location>
        <begin position="228"/>
        <end position="232"/>
    </location>
</feature>
<feature type="strand" evidence="17">
    <location>
        <begin position="238"/>
        <end position="240"/>
    </location>
</feature>
<feature type="helix" evidence="17">
    <location>
        <begin position="248"/>
        <end position="258"/>
    </location>
</feature>
<feature type="strand" evidence="17">
    <location>
        <begin position="267"/>
        <end position="269"/>
    </location>
</feature>